<dbReference type="EC" id="3.6.5.3" evidence="2"/>
<dbReference type="EMBL" id="CP000521">
    <property type="protein sequence ID" value="ABO10750.2"/>
    <property type="molecule type" value="Genomic_DNA"/>
</dbReference>
<dbReference type="EMBL" id="CP000521">
    <property type="protein sequence ID" value="ABO11301.2"/>
    <property type="status" value="ALT_SEQ"/>
    <property type="molecule type" value="Genomic_DNA"/>
</dbReference>
<dbReference type="SMR" id="A3M1F6"/>
<dbReference type="KEGG" id="acb:A1S_0279"/>
<dbReference type="KEGG" id="acb:A1S_0869"/>
<dbReference type="HOGENOM" id="CLU_007265_0_0_6"/>
<dbReference type="GO" id="GO:0005829">
    <property type="term" value="C:cytosol"/>
    <property type="evidence" value="ECO:0007669"/>
    <property type="project" value="TreeGrafter"/>
</dbReference>
<dbReference type="GO" id="GO:0005525">
    <property type="term" value="F:GTP binding"/>
    <property type="evidence" value="ECO:0007669"/>
    <property type="project" value="UniProtKB-UniRule"/>
</dbReference>
<dbReference type="GO" id="GO:0003924">
    <property type="term" value="F:GTPase activity"/>
    <property type="evidence" value="ECO:0007669"/>
    <property type="project" value="InterPro"/>
</dbReference>
<dbReference type="GO" id="GO:0097216">
    <property type="term" value="F:guanosine tetraphosphate binding"/>
    <property type="evidence" value="ECO:0007669"/>
    <property type="project" value="UniProtKB-ARBA"/>
</dbReference>
<dbReference type="GO" id="GO:0003746">
    <property type="term" value="F:translation elongation factor activity"/>
    <property type="evidence" value="ECO:0007669"/>
    <property type="project" value="UniProtKB-UniRule"/>
</dbReference>
<dbReference type="CDD" id="cd01884">
    <property type="entry name" value="EF_Tu"/>
    <property type="match status" value="1"/>
</dbReference>
<dbReference type="CDD" id="cd03697">
    <property type="entry name" value="EFTU_II"/>
    <property type="match status" value="1"/>
</dbReference>
<dbReference type="CDD" id="cd03707">
    <property type="entry name" value="EFTU_III"/>
    <property type="match status" value="1"/>
</dbReference>
<dbReference type="FunFam" id="2.40.30.10:FF:000001">
    <property type="entry name" value="Elongation factor Tu"/>
    <property type="match status" value="1"/>
</dbReference>
<dbReference type="FunFam" id="3.40.50.300:FF:000003">
    <property type="entry name" value="Elongation factor Tu"/>
    <property type="match status" value="1"/>
</dbReference>
<dbReference type="Gene3D" id="3.40.50.300">
    <property type="entry name" value="P-loop containing nucleotide triphosphate hydrolases"/>
    <property type="match status" value="1"/>
</dbReference>
<dbReference type="Gene3D" id="2.40.30.10">
    <property type="entry name" value="Translation factors"/>
    <property type="match status" value="2"/>
</dbReference>
<dbReference type="HAMAP" id="MF_00118_B">
    <property type="entry name" value="EF_Tu_B"/>
    <property type="match status" value="1"/>
</dbReference>
<dbReference type="InterPro" id="IPR041709">
    <property type="entry name" value="EF-Tu_GTP-bd"/>
</dbReference>
<dbReference type="InterPro" id="IPR050055">
    <property type="entry name" value="EF-Tu_GTPase"/>
</dbReference>
<dbReference type="InterPro" id="IPR004161">
    <property type="entry name" value="EFTu-like_2"/>
</dbReference>
<dbReference type="InterPro" id="IPR033720">
    <property type="entry name" value="EFTU_2"/>
</dbReference>
<dbReference type="InterPro" id="IPR031157">
    <property type="entry name" value="G_TR_CS"/>
</dbReference>
<dbReference type="InterPro" id="IPR027417">
    <property type="entry name" value="P-loop_NTPase"/>
</dbReference>
<dbReference type="InterPro" id="IPR005225">
    <property type="entry name" value="Small_GTP-bd"/>
</dbReference>
<dbReference type="InterPro" id="IPR000795">
    <property type="entry name" value="T_Tr_GTP-bd_dom"/>
</dbReference>
<dbReference type="InterPro" id="IPR009000">
    <property type="entry name" value="Transl_B-barrel_sf"/>
</dbReference>
<dbReference type="InterPro" id="IPR009001">
    <property type="entry name" value="Transl_elong_EF1A/Init_IF2_C"/>
</dbReference>
<dbReference type="InterPro" id="IPR004541">
    <property type="entry name" value="Transl_elong_EFTu/EF1A_bac/org"/>
</dbReference>
<dbReference type="InterPro" id="IPR004160">
    <property type="entry name" value="Transl_elong_EFTu/EF1A_C"/>
</dbReference>
<dbReference type="NCBIfam" id="TIGR00485">
    <property type="entry name" value="EF-Tu"/>
    <property type="match status" value="1"/>
</dbReference>
<dbReference type="NCBIfam" id="NF000766">
    <property type="entry name" value="PRK00049.1"/>
    <property type="match status" value="1"/>
</dbReference>
<dbReference type="NCBIfam" id="NF009372">
    <property type="entry name" value="PRK12735.1"/>
    <property type="match status" value="1"/>
</dbReference>
<dbReference type="NCBIfam" id="NF009373">
    <property type="entry name" value="PRK12736.1"/>
    <property type="match status" value="1"/>
</dbReference>
<dbReference type="NCBIfam" id="TIGR00231">
    <property type="entry name" value="small_GTP"/>
    <property type="match status" value="1"/>
</dbReference>
<dbReference type="PANTHER" id="PTHR43721:SF22">
    <property type="entry name" value="ELONGATION FACTOR TU, MITOCHONDRIAL"/>
    <property type="match status" value="1"/>
</dbReference>
<dbReference type="PANTHER" id="PTHR43721">
    <property type="entry name" value="ELONGATION FACTOR TU-RELATED"/>
    <property type="match status" value="1"/>
</dbReference>
<dbReference type="Pfam" id="PF00009">
    <property type="entry name" value="GTP_EFTU"/>
    <property type="match status" value="1"/>
</dbReference>
<dbReference type="Pfam" id="PF03144">
    <property type="entry name" value="GTP_EFTU_D2"/>
    <property type="match status" value="1"/>
</dbReference>
<dbReference type="Pfam" id="PF03143">
    <property type="entry name" value="GTP_EFTU_D3"/>
    <property type="match status" value="1"/>
</dbReference>
<dbReference type="PRINTS" id="PR00315">
    <property type="entry name" value="ELONGATNFCT"/>
</dbReference>
<dbReference type="SUPFAM" id="SSF50465">
    <property type="entry name" value="EF-Tu/eEF-1alpha/eIF2-gamma C-terminal domain"/>
    <property type="match status" value="1"/>
</dbReference>
<dbReference type="SUPFAM" id="SSF52540">
    <property type="entry name" value="P-loop containing nucleoside triphosphate hydrolases"/>
    <property type="match status" value="1"/>
</dbReference>
<dbReference type="SUPFAM" id="SSF50447">
    <property type="entry name" value="Translation proteins"/>
    <property type="match status" value="1"/>
</dbReference>
<dbReference type="PROSITE" id="PS00301">
    <property type="entry name" value="G_TR_1"/>
    <property type="match status" value="1"/>
</dbReference>
<dbReference type="PROSITE" id="PS51722">
    <property type="entry name" value="G_TR_2"/>
    <property type="match status" value="1"/>
</dbReference>
<name>EFTU_ACIBT</name>
<proteinExistence type="inferred from homology"/>
<protein>
    <recommendedName>
        <fullName evidence="2">Elongation factor Tu</fullName>
        <shortName evidence="2">EF-Tu</shortName>
        <ecNumber evidence="2">3.6.5.3</ecNumber>
    </recommendedName>
</protein>
<gene>
    <name evidence="2" type="primary">tuf1</name>
    <name type="ordered locus">A1S_0279</name>
</gene>
<gene>
    <name evidence="2" type="primary">tuf2</name>
    <name type="ordered locus">A1S_0869</name>
</gene>
<organism>
    <name type="scientific">Acinetobacter baumannii (strain ATCC 17978 / DSM 105126 / CIP 53.77 / LMG 1025 / NCDC KC755 / 5377)</name>
    <dbReference type="NCBI Taxonomy" id="400667"/>
    <lineage>
        <taxon>Bacteria</taxon>
        <taxon>Pseudomonadati</taxon>
        <taxon>Pseudomonadota</taxon>
        <taxon>Gammaproteobacteria</taxon>
        <taxon>Moraxellales</taxon>
        <taxon>Moraxellaceae</taxon>
        <taxon>Acinetobacter</taxon>
        <taxon>Acinetobacter calcoaceticus/baumannii complex</taxon>
    </lineage>
</organism>
<evidence type="ECO:0000250" key="1"/>
<evidence type="ECO:0000255" key="2">
    <source>
        <dbReference type="HAMAP-Rule" id="MF_00118"/>
    </source>
</evidence>
<evidence type="ECO:0000305" key="3"/>
<feature type="chain" id="PRO_0000337301" description="Elongation factor Tu">
    <location>
        <begin position="1"/>
        <end position="396"/>
    </location>
</feature>
<feature type="domain" description="tr-type G">
    <location>
        <begin position="10"/>
        <end position="206"/>
    </location>
</feature>
<feature type="region of interest" description="G1" evidence="1">
    <location>
        <begin position="19"/>
        <end position="26"/>
    </location>
</feature>
<feature type="region of interest" description="G2" evidence="1">
    <location>
        <begin position="60"/>
        <end position="64"/>
    </location>
</feature>
<feature type="region of interest" description="G3" evidence="1">
    <location>
        <begin position="81"/>
        <end position="84"/>
    </location>
</feature>
<feature type="region of interest" description="G4" evidence="1">
    <location>
        <begin position="136"/>
        <end position="139"/>
    </location>
</feature>
<feature type="region of interest" description="G5" evidence="1">
    <location>
        <begin position="174"/>
        <end position="176"/>
    </location>
</feature>
<feature type="binding site" evidence="2">
    <location>
        <begin position="19"/>
        <end position="26"/>
    </location>
    <ligand>
        <name>GTP</name>
        <dbReference type="ChEBI" id="CHEBI:37565"/>
    </ligand>
</feature>
<feature type="binding site" evidence="2">
    <location>
        <position position="26"/>
    </location>
    <ligand>
        <name>Mg(2+)</name>
        <dbReference type="ChEBI" id="CHEBI:18420"/>
    </ligand>
</feature>
<feature type="binding site" evidence="2">
    <location>
        <begin position="81"/>
        <end position="85"/>
    </location>
    <ligand>
        <name>GTP</name>
        <dbReference type="ChEBI" id="CHEBI:37565"/>
    </ligand>
</feature>
<feature type="binding site" evidence="2">
    <location>
        <begin position="136"/>
        <end position="139"/>
    </location>
    <ligand>
        <name>GTP</name>
        <dbReference type="ChEBI" id="CHEBI:37565"/>
    </ligand>
</feature>
<accession>A3M1F6</accession>
<sequence>MAKAKFERNKPHVNVGTIGHVDHGKTTLTAAIATICAKTYGGEAKDYSQIDSAPEEKARGITINTSHVEYDSPTRHYAHVDCPGHADYVKNMITGAAQMDGAILVCAATDGPMPQTREHILLSRQVGVPYIIVFLNKCDLVDDEELLELVEMEVRELLSTYDFPGDDTPVIRGSALAALNGEAGPYGEESVLALVAALDSYIPEPERAIDKAFLMPIEDVFSISGRGTVVTGRVEAGIIKVGEEVEIVGIKDTVKTTVTGVEMFRKLLDEGRAGENCGILLRGTKREEVQRGQVLAKPGTIKPHTKFDAEVYVLSKEEGGRHTPFLNGYRPQFYFRTTDVTGAIQLKEGVEMVMPGDNVEMSVELIHPIAMDPGLRFAIREGGRTVGAGVVAKVTA</sequence>
<comment type="function">
    <text evidence="2">GTP hydrolase that promotes the GTP-dependent binding of aminoacyl-tRNA to the A-site of ribosomes during protein biosynthesis.</text>
</comment>
<comment type="catalytic activity">
    <reaction evidence="2">
        <text>GTP + H2O = GDP + phosphate + H(+)</text>
        <dbReference type="Rhea" id="RHEA:19669"/>
        <dbReference type="ChEBI" id="CHEBI:15377"/>
        <dbReference type="ChEBI" id="CHEBI:15378"/>
        <dbReference type="ChEBI" id="CHEBI:37565"/>
        <dbReference type="ChEBI" id="CHEBI:43474"/>
        <dbReference type="ChEBI" id="CHEBI:58189"/>
        <dbReference type="EC" id="3.6.5.3"/>
    </reaction>
    <physiologicalReaction direction="left-to-right" evidence="2">
        <dbReference type="Rhea" id="RHEA:19670"/>
    </physiologicalReaction>
</comment>
<comment type="subunit">
    <text evidence="2">Monomer.</text>
</comment>
<comment type="subcellular location">
    <subcellularLocation>
        <location evidence="2">Cytoplasm</location>
    </subcellularLocation>
</comment>
<comment type="similarity">
    <text evidence="2">Belongs to the TRAFAC class translation factor GTPase superfamily. Classic translation factor GTPase family. EF-Tu/EF-1A subfamily.</text>
</comment>
<comment type="sequence caution" evidence="3">
    <conflict type="miscellaneous discrepancy">
        <sequence resource="EMBL-CDS" id="ABO11301"/>
    </conflict>
    <text>This prediction is not full-length and may not be functional.</text>
</comment>
<reference key="1">
    <citation type="journal article" date="2007" name="Genes Dev.">
        <title>New insights into Acinetobacter baumannii pathogenesis revealed by high-density pyrosequencing and transposon mutagenesis.</title>
        <authorList>
            <person name="Smith M.G."/>
            <person name="Gianoulis T.A."/>
            <person name="Pukatzki S."/>
            <person name="Mekalanos J.J."/>
            <person name="Ornston L.N."/>
            <person name="Gerstein M."/>
            <person name="Snyder M."/>
        </authorList>
    </citation>
    <scope>NUCLEOTIDE SEQUENCE [LARGE SCALE GENOMIC DNA]</scope>
    <source>
        <strain>ATCC 17978 / DSM 105126 / CIP 53.77 / LMG 1025 / NCDC KC755 / 5377</strain>
    </source>
</reference>
<keyword id="KW-0963">Cytoplasm</keyword>
<keyword id="KW-0251">Elongation factor</keyword>
<keyword id="KW-0342">GTP-binding</keyword>
<keyword id="KW-0378">Hydrolase</keyword>
<keyword id="KW-0460">Magnesium</keyword>
<keyword id="KW-0479">Metal-binding</keyword>
<keyword id="KW-0547">Nucleotide-binding</keyword>
<keyword id="KW-0648">Protein biosynthesis</keyword>